<gene>
    <name evidence="1" type="primary">dapD</name>
    <name type="ordered locus">Nwi_3069</name>
</gene>
<accession>Q3SN24</accession>
<comment type="catalytic activity">
    <reaction evidence="1">
        <text>(S)-2,3,4,5-tetrahydrodipicolinate + succinyl-CoA + H2O = (S)-2-succinylamino-6-oxoheptanedioate + CoA</text>
        <dbReference type="Rhea" id="RHEA:17325"/>
        <dbReference type="ChEBI" id="CHEBI:15377"/>
        <dbReference type="ChEBI" id="CHEBI:15685"/>
        <dbReference type="ChEBI" id="CHEBI:16845"/>
        <dbReference type="ChEBI" id="CHEBI:57287"/>
        <dbReference type="ChEBI" id="CHEBI:57292"/>
        <dbReference type="EC" id="2.3.1.117"/>
    </reaction>
</comment>
<comment type="pathway">
    <text evidence="1">Amino-acid biosynthesis; L-lysine biosynthesis via DAP pathway; LL-2,6-diaminopimelate from (S)-tetrahydrodipicolinate (succinylase route): step 1/3.</text>
</comment>
<comment type="subunit">
    <text evidence="1">Homotrimer.</text>
</comment>
<comment type="subcellular location">
    <subcellularLocation>
        <location evidence="1">Cytoplasm</location>
    </subcellularLocation>
</comment>
<comment type="similarity">
    <text evidence="1">Belongs to the transferase hexapeptide repeat family.</text>
</comment>
<protein>
    <recommendedName>
        <fullName evidence="1">2,3,4,5-tetrahydropyridine-2,6-dicarboxylate N-succinyltransferase</fullName>
        <ecNumber evidence="1">2.3.1.117</ecNumber>
    </recommendedName>
    <alternativeName>
        <fullName evidence="1">Tetrahydrodipicolinate N-succinyltransferase</fullName>
        <shortName evidence="1">THDP succinyltransferase</shortName>
        <shortName evidence="1">THP succinyltransferase</shortName>
        <shortName evidence="1">Tetrahydropicolinate succinylase</shortName>
    </alternativeName>
</protein>
<organism>
    <name type="scientific">Nitrobacter winogradskyi (strain ATCC 25391 / DSM 10237 / CIP 104748 / NCIMB 11846 / Nb-255)</name>
    <dbReference type="NCBI Taxonomy" id="323098"/>
    <lineage>
        <taxon>Bacteria</taxon>
        <taxon>Pseudomonadati</taxon>
        <taxon>Pseudomonadota</taxon>
        <taxon>Alphaproteobacteria</taxon>
        <taxon>Hyphomicrobiales</taxon>
        <taxon>Nitrobacteraceae</taxon>
        <taxon>Nitrobacter</taxon>
    </lineage>
</organism>
<sequence length="281" mass="29938">MPTASLETTINGAFDARETITPATRGEVRDAVDQALGLLDKGEARVAERAADGKWQVNQWLKKAVLLSFRLNDMSVIPGGPGNAAWWDKVPSKFEGWDENRFRDAGFRAVPGAIVRRSAFIARNVVLMPSFVNLGAYVDESTMVDTWCTVGSCAQIGKRVHISGGAGIGGVLEPLQAGPVIIEDDCFIGARSEVAEGVIVRKGAVLSMGVFLGASTKIVDRTTGEIFMGEVPEYAVVVPGALPGKPLSNGQLGPSTACAVIVKRVDERTRSKTGINELLRD</sequence>
<dbReference type="EC" id="2.3.1.117" evidence="1"/>
<dbReference type="EMBL" id="CP000115">
    <property type="protein sequence ID" value="ABA06317.1"/>
    <property type="molecule type" value="Genomic_DNA"/>
</dbReference>
<dbReference type="RefSeq" id="WP_011316233.1">
    <property type="nucleotide sequence ID" value="NC_007406.1"/>
</dbReference>
<dbReference type="SMR" id="Q3SN24"/>
<dbReference type="STRING" id="323098.Nwi_3069"/>
<dbReference type="KEGG" id="nwi:Nwi_3069"/>
<dbReference type="eggNOG" id="COG2171">
    <property type="taxonomic scope" value="Bacteria"/>
</dbReference>
<dbReference type="HOGENOM" id="CLU_050859_0_1_5"/>
<dbReference type="OrthoDB" id="9775362at2"/>
<dbReference type="UniPathway" id="UPA00034">
    <property type="reaction ID" value="UER00019"/>
</dbReference>
<dbReference type="Proteomes" id="UP000002531">
    <property type="component" value="Chromosome"/>
</dbReference>
<dbReference type="GO" id="GO:0005737">
    <property type="term" value="C:cytoplasm"/>
    <property type="evidence" value="ECO:0007669"/>
    <property type="project" value="UniProtKB-SubCell"/>
</dbReference>
<dbReference type="GO" id="GO:0008666">
    <property type="term" value="F:2,3,4,5-tetrahydropyridine-2,6-dicarboxylate N-succinyltransferase activity"/>
    <property type="evidence" value="ECO:0007669"/>
    <property type="project" value="UniProtKB-UniRule"/>
</dbReference>
<dbReference type="GO" id="GO:0016779">
    <property type="term" value="F:nucleotidyltransferase activity"/>
    <property type="evidence" value="ECO:0007669"/>
    <property type="project" value="TreeGrafter"/>
</dbReference>
<dbReference type="GO" id="GO:0019877">
    <property type="term" value="P:diaminopimelate biosynthetic process"/>
    <property type="evidence" value="ECO:0007669"/>
    <property type="project" value="UniProtKB-UniRule"/>
</dbReference>
<dbReference type="GO" id="GO:0009089">
    <property type="term" value="P:lysine biosynthetic process via diaminopimelate"/>
    <property type="evidence" value="ECO:0007669"/>
    <property type="project" value="UniProtKB-UniRule"/>
</dbReference>
<dbReference type="CDD" id="cd03350">
    <property type="entry name" value="LbH_THP_succinylT"/>
    <property type="match status" value="1"/>
</dbReference>
<dbReference type="Gene3D" id="2.160.10.10">
    <property type="entry name" value="Hexapeptide repeat proteins"/>
    <property type="match status" value="1"/>
</dbReference>
<dbReference type="Gene3D" id="1.10.166.10">
    <property type="entry name" value="Tetrahydrodipicolinate-N-succinyltransferase, N-terminal domain"/>
    <property type="match status" value="1"/>
</dbReference>
<dbReference type="HAMAP" id="MF_00811">
    <property type="entry name" value="DapD"/>
    <property type="match status" value="1"/>
</dbReference>
<dbReference type="InterPro" id="IPR005664">
    <property type="entry name" value="DapD_Trfase_Hexpep_rpt_fam"/>
</dbReference>
<dbReference type="InterPro" id="IPR001451">
    <property type="entry name" value="Hexapep"/>
</dbReference>
<dbReference type="InterPro" id="IPR023180">
    <property type="entry name" value="THP_succinylTrfase_dom1"/>
</dbReference>
<dbReference type="InterPro" id="IPR037133">
    <property type="entry name" value="THP_succinylTrfase_N_sf"/>
</dbReference>
<dbReference type="InterPro" id="IPR011004">
    <property type="entry name" value="Trimer_LpxA-like_sf"/>
</dbReference>
<dbReference type="NCBIfam" id="TIGR00965">
    <property type="entry name" value="dapD"/>
    <property type="match status" value="1"/>
</dbReference>
<dbReference type="NCBIfam" id="NF008808">
    <property type="entry name" value="PRK11830.1"/>
    <property type="match status" value="1"/>
</dbReference>
<dbReference type="PANTHER" id="PTHR19136:SF52">
    <property type="entry name" value="2,3,4,5-TETRAHYDROPYRIDINE-2,6-DICARBOXYLATE N-SUCCINYLTRANSFERASE"/>
    <property type="match status" value="1"/>
</dbReference>
<dbReference type="PANTHER" id="PTHR19136">
    <property type="entry name" value="MOLYBDENUM COFACTOR GUANYLYLTRANSFERASE"/>
    <property type="match status" value="1"/>
</dbReference>
<dbReference type="Pfam" id="PF14602">
    <property type="entry name" value="Hexapep_2"/>
    <property type="match status" value="1"/>
</dbReference>
<dbReference type="Pfam" id="PF14805">
    <property type="entry name" value="THDPS_N_2"/>
    <property type="match status" value="1"/>
</dbReference>
<dbReference type="SUPFAM" id="SSF51161">
    <property type="entry name" value="Trimeric LpxA-like enzymes"/>
    <property type="match status" value="1"/>
</dbReference>
<name>DAPD_NITWN</name>
<proteinExistence type="inferred from homology"/>
<keyword id="KW-0012">Acyltransferase</keyword>
<keyword id="KW-0028">Amino-acid biosynthesis</keyword>
<keyword id="KW-0963">Cytoplasm</keyword>
<keyword id="KW-0220">Diaminopimelate biosynthesis</keyword>
<keyword id="KW-0457">Lysine biosynthesis</keyword>
<keyword id="KW-1185">Reference proteome</keyword>
<keyword id="KW-0677">Repeat</keyword>
<keyword id="KW-0808">Transferase</keyword>
<evidence type="ECO:0000255" key="1">
    <source>
        <dbReference type="HAMAP-Rule" id="MF_00811"/>
    </source>
</evidence>
<feature type="chain" id="PRO_1000047158" description="2,3,4,5-tetrahydropyridine-2,6-dicarboxylate N-succinyltransferase">
    <location>
        <begin position="1"/>
        <end position="281"/>
    </location>
</feature>
<feature type="binding site" evidence="1">
    <location>
        <position position="108"/>
    </location>
    <ligand>
        <name>substrate</name>
    </ligand>
</feature>
<feature type="binding site" evidence="1">
    <location>
        <position position="145"/>
    </location>
    <ligand>
        <name>substrate</name>
    </ligand>
</feature>
<reference key="1">
    <citation type="journal article" date="2006" name="Appl. Environ. Microbiol.">
        <title>Genome sequence of the chemolithoautotrophic nitrite-oxidizing bacterium Nitrobacter winogradskyi Nb-255.</title>
        <authorList>
            <person name="Starkenburg S.R."/>
            <person name="Chain P.S.G."/>
            <person name="Sayavedra-Soto L.A."/>
            <person name="Hauser L."/>
            <person name="Land M.L."/>
            <person name="Larimer F.W."/>
            <person name="Malfatti S.A."/>
            <person name="Klotz M.G."/>
            <person name="Bottomley P.J."/>
            <person name="Arp D.J."/>
            <person name="Hickey W.J."/>
        </authorList>
    </citation>
    <scope>NUCLEOTIDE SEQUENCE [LARGE SCALE GENOMIC DNA]</scope>
    <source>
        <strain>ATCC 25391 / DSM 10237 / CIP 104748 / NCIMB 11846 / Nb-255</strain>
    </source>
</reference>